<protein>
    <recommendedName>
        <fullName>RAS protein activator like-3</fullName>
    </recommendedName>
</protein>
<reference key="1">
    <citation type="submission" date="2007-07" db="EMBL/GenBank/DDBJ databases">
        <authorList>
            <consortium name="NIH - Mammalian Gene Collection (MGC) project"/>
        </authorList>
    </citation>
    <scope>NUCLEOTIDE SEQUENCE [LARGE SCALE MRNA]</scope>
    <source>
        <strain>Hereford</strain>
        <tissue>Thymus</tissue>
    </source>
</reference>
<accession>A6QQ91</accession>
<feature type="chain" id="PRO_0000322565" description="RAS protein activator like-3">
    <location>
        <begin position="1"/>
        <end position="1012"/>
    </location>
</feature>
<feature type="domain" description="PH">
    <location>
        <begin position="193"/>
        <end position="294"/>
    </location>
</feature>
<feature type="domain" description="C2" evidence="4">
    <location>
        <begin position="285"/>
        <end position="405"/>
    </location>
</feature>
<feature type="domain" description="Ras-GAP" evidence="5">
    <location>
        <begin position="475"/>
        <end position="683"/>
    </location>
</feature>
<feature type="region of interest" description="Disordered" evidence="6">
    <location>
        <begin position="1"/>
        <end position="128"/>
    </location>
</feature>
<feature type="region of interest" description="Disordered" evidence="6">
    <location>
        <begin position="147"/>
        <end position="196"/>
    </location>
</feature>
<feature type="region of interest" description="Disordered" evidence="6">
    <location>
        <begin position="208"/>
        <end position="229"/>
    </location>
</feature>
<feature type="region of interest" description="Disordered" evidence="6">
    <location>
        <begin position="752"/>
        <end position="887"/>
    </location>
</feature>
<feature type="region of interest" description="Disordered" evidence="6">
    <location>
        <begin position="990"/>
        <end position="1012"/>
    </location>
</feature>
<feature type="coiled-coil region" evidence="3">
    <location>
        <begin position="889"/>
        <end position="989"/>
    </location>
</feature>
<feature type="compositionally biased region" description="Polar residues" evidence="6">
    <location>
        <begin position="7"/>
        <end position="21"/>
    </location>
</feature>
<feature type="compositionally biased region" description="Gly residues" evidence="6">
    <location>
        <begin position="27"/>
        <end position="39"/>
    </location>
</feature>
<feature type="compositionally biased region" description="Polar residues" evidence="6">
    <location>
        <begin position="50"/>
        <end position="62"/>
    </location>
</feature>
<feature type="compositionally biased region" description="Acidic residues" evidence="6">
    <location>
        <begin position="100"/>
        <end position="113"/>
    </location>
</feature>
<feature type="compositionally biased region" description="Low complexity" evidence="6">
    <location>
        <begin position="160"/>
        <end position="171"/>
    </location>
</feature>
<feature type="compositionally biased region" description="Basic and acidic residues" evidence="6">
    <location>
        <begin position="175"/>
        <end position="186"/>
    </location>
</feature>
<feature type="compositionally biased region" description="Basic residues" evidence="6">
    <location>
        <begin position="826"/>
        <end position="841"/>
    </location>
</feature>
<feature type="compositionally biased region" description="Polar residues" evidence="6">
    <location>
        <begin position="990"/>
        <end position="999"/>
    </location>
</feature>
<feature type="site" description="Arginine finger; crucial for GTP hydrolysis by stabilizing the transition state" evidence="5">
    <location>
        <position position="501"/>
    </location>
</feature>
<feature type="modified residue" description="Phosphoserine" evidence="1">
    <location>
        <position position="18"/>
    </location>
</feature>
<feature type="modified residue" description="Phosphoserine" evidence="1">
    <location>
        <position position="51"/>
    </location>
</feature>
<feature type="modified residue" description="Phosphoserine" evidence="1">
    <location>
        <position position="160"/>
    </location>
</feature>
<feature type="modified residue" description="Phosphoserine" evidence="2">
    <location>
        <position position="162"/>
    </location>
</feature>
<feature type="modified residue" description="Phosphoserine" evidence="1">
    <location>
        <position position="163"/>
    </location>
</feature>
<feature type="modified residue" description="Phosphoserine" evidence="2">
    <location>
        <position position="166"/>
    </location>
</feature>
<feature type="modified residue" description="Phosphoserine" evidence="2">
    <location>
        <position position="212"/>
    </location>
</feature>
<feature type="modified residue" description="Phosphoserine" evidence="2">
    <location>
        <position position="225"/>
    </location>
</feature>
<feature type="modified residue" description="Phosphoserine" evidence="2">
    <location>
        <position position="229"/>
    </location>
</feature>
<feature type="modified residue" description="Phosphoserine" evidence="1">
    <location>
        <position position="232"/>
    </location>
</feature>
<feature type="modified residue" description="Phosphothreonine" evidence="2">
    <location>
        <position position="235"/>
    </location>
</feature>
<feature type="modified residue" description="Phosphoserine" evidence="2">
    <location>
        <position position="788"/>
    </location>
</feature>
<feature type="modified residue" description="Phosphoserine" evidence="2">
    <location>
        <position position="791"/>
    </location>
</feature>
<organism>
    <name type="scientific">Bos taurus</name>
    <name type="common">Bovine</name>
    <dbReference type="NCBI Taxonomy" id="9913"/>
    <lineage>
        <taxon>Eukaryota</taxon>
        <taxon>Metazoa</taxon>
        <taxon>Chordata</taxon>
        <taxon>Craniata</taxon>
        <taxon>Vertebrata</taxon>
        <taxon>Euteleostomi</taxon>
        <taxon>Mammalia</taxon>
        <taxon>Eutheria</taxon>
        <taxon>Laurasiatheria</taxon>
        <taxon>Artiodactyla</taxon>
        <taxon>Ruminantia</taxon>
        <taxon>Pecora</taxon>
        <taxon>Bovidae</taxon>
        <taxon>Bovinae</taxon>
        <taxon>Bos</taxon>
    </lineage>
</organism>
<gene>
    <name type="primary">RASAL3</name>
</gene>
<dbReference type="EMBL" id="BC149708">
    <property type="protein sequence ID" value="AAI49709.1"/>
    <property type="molecule type" value="mRNA"/>
</dbReference>
<dbReference type="RefSeq" id="NP_001095706.1">
    <property type="nucleotide sequence ID" value="NM_001102236.2"/>
</dbReference>
<dbReference type="SMR" id="A6QQ91"/>
<dbReference type="FunCoup" id="A6QQ91">
    <property type="interactions" value="660"/>
</dbReference>
<dbReference type="STRING" id="9913.ENSBTAP00000015416"/>
<dbReference type="PaxDb" id="9913-ENSBTAP00000015416"/>
<dbReference type="Ensembl" id="ENSBTAT00000015416.6">
    <property type="protein sequence ID" value="ENSBTAP00000015416.4"/>
    <property type="gene ID" value="ENSBTAG00000011602.6"/>
</dbReference>
<dbReference type="GeneID" id="540027"/>
<dbReference type="KEGG" id="bta:540027"/>
<dbReference type="CTD" id="64926"/>
<dbReference type="VEuPathDB" id="HostDB:ENSBTAG00000011602"/>
<dbReference type="VGNC" id="VGNC:33739">
    <property type="gene designation" value="RASAL3"/>
</dbReference>
<dbReference type="eggNOG" id="KOG3508">
    <property type="taxonomic scope" value="Eukaryota"/>
</dbReference>
<dbReference type="GeneTree" id="ENSGT00940000161423"/>
<dbReference type="HOGENOM" id="CLU_009167_0_0_1"/>
<dbReference type="InParanoid" id="A6QQ91"/>
<dbReference type="OMA" id="TWGSRSQ"/>
<dbReference type="OrthoDB" id="5572587at2759"/>
<dbReference type="TreeFam" id="TF105303"/>
<dbReference type="Proteomes" id="UP000009136">
    <property type="component" value="Chromosome 7"/>
</dbReference>
<dbReference type="Bgee" id="ENSBTAG00000011602">
    <property type="expression patterns" value="Expressed in mesenteric lymph node and 95 other cell types or tissues"/>
</dbReference>
<dbReference type="GO" id="GO:0005938">
    <property type="term" value="C:cell cortex"/>
    <property type="evidence" value="ECO:0007669"/>
    <property type="project" value="UniProtKB-SubCell"/>
</dbReference>
<dbReference type="GO" id="GO:0005737">
    <property type="term" value="C:cytoplasm"/>
    <property type="evidence" value="ECO:0000250"/>
    <property type="project" value="UniProtKB"/>
</dbReference>
<dbReference type="GO" id="GO:0098562">
    <property type="term" value="C:cytoplasmic side of membrane"/>
    <property type="evidence" value="ECO:0007669"/>
    <property type="project" value="Ensembl"/>
</dbReference>
<dbReference type="GO" id="GO:0005096">
    <property type="term" value="F:GTPase activator activity"/>
    <property type="evidence" value="ECO:0007669"/>
    <property type="project" value="UniProtKB-KW"/>
</dbReference>
<dbReference type="GO" id="GO:0042802">
    <property type="term" value="F:identical protein binding"/>
    <property type="evidence" value="ECO:0007669"/>
    <property type="project" value="Ensembl"/>
</dbReference>
<dbReference type="GO" id="GO:0046580">
    <property type="term" value="P:negative regulation of Ras protein signal transduction"/>
    <property type="evidence" value="ECO:0000250"/>
    <property type="project" value="UniProtKB"/>
</dbReference>
<dbReference type="GO" id="GO:0051142">
    <property type="term" value="P:positive regulation of NK T cell proliferation"/>
    <property type="evidence" value="ECO:0000250"/>
    <property type="project" value="UniProtKB"/>
</dbReference>
<dbReference type="CDD" id="cd13374">
    <property type="entry name" value="PH_RASAL3"/>
    <property type="match status" value="1"/>
</dbReference>
<dbReference type="CDD" id="cd05136">
    <property type="entry name" value="RasGAP_DAB2IP"/>
    <property type="match status" value="1"/>
</dbReference>
<dbReference type="FunFam" id="1.10.506.10:FF:000032">
    <property type="entry name" value="RAS protein activator like-3"/>
    <property type="match status" value="1"/>
</dbReference>
<dbReference type="Gene3D" id="1.20.5.170">
    <property type="match status" value="1"/>
</dbReference>
<dbReference type="Gene3D" id="1.10.506.10">
    <property type="entry name" value="GTPase Activation - p120gap, domain 1"/>
    <property type="match status" value="2"/>
</dbReference>
<dbReference type="InterPro" id="IPR000008">
    <property type="entry name" value="C2_dom"/>
</dbReference>
<dbReference type="InterPro" id="IPR035892">
    <property type="entry name" value="C2_domain_sf"/>
</dbReference>
<dbReference type="InterPro" id="IPR039360">
    <property type="entry name" value="Ras_GTPase"/>
</dbReference>
<dbReference type="InterPro" id="IPR023152">
    <property type="entry name" value="RasGAP_CS"/>
</dbReference>
<dbReference type="InterPro" id="IPR001936">
    <property type="entry name" value="RasGAP_dom"/>
</dbReference>
<dbReference type="InterPro" id="IPR008936">
    <property type="entry name" value="Rho_GTPase_activation_prot"/>
</dbReference>
<dbReference type="PANTHER" id="PTHR10194">
    <property type="entry name" value="RAS GTPASE-ACTIVATING PROTEINS"/>
    <property type="match status" value="1"/>
</dbReference>
<dbReference type="PANTHER" id="PTHR10194:SF96">
    <property type="entry name" value="RAS PROTEIN ACTIVATOR LIKE-3"/>
    <property type="match status" value="1"/>
</dbReference>
<dbReference type="Pfam" id="PF25321">
    <property type="entry name" value="PH_RASGAP"/>
    <property type="match status" value="1"/>
</dbReference>
<dbReference type="Pfam" id="PF00616">
    <property type="entry name" value="RasGAP"/>
    <property type="match status" value="2"/>
</dbReference>
<dbReference type="SMART" id="SM00323">
    <property type="entry name" value="RasGAP"/>
    <property type="match status" value="1"/>
</dbReference>
<dbReference type="SUPFAM" id="SSF49562">
    <property type="entry name" value="C2 domain (Calcium/lipid-binding domain, CaLB)"/>
    <property type="match status" value="1"/>
</dbReference>
<dbReference type="SUPFAM" id="SSF48350">
    <property type="entry name" value="GTPase activation domain, GAP"/>
    <property type="match status" value="1"/>
</dbReference>
<dbReference type="SUPFAM" id="SSF50729">
    <property type="entry name" value="PH domain-like"/>
    <property type="match status" value="1"/>
</dbReference>
<dbReference type="PROSITE" id="PS50004">
    <property type="entry name" value="C2"/>
    <property type="match status" value="1"/>
</dbReference>
<dbReference type="PROSITE" id="PS00509">
    <property type="entry name" value="RAS_GTPASE_ACTIV_1"/>
    <property type="match status" value="1"/>
</dbReference>
<dbReference type="PROSITE" id="PS50018">
    <property type="entry name" value="RAS_GTPASE_ACTIV_2"/>
    <property type="match status" value="1"/>
</dbReference>
<proteinExistence type="evidence at transcript level"/>
<comment type="function">
    <text evidence="2">Functions as a Ras GTPase-activating protein. Plays an important role in the expansion and functions of natural killer T (NKT) cells in the liver by negatively regulating RAS activity and the down-stream ERK signaling pathway.</text>
</comment>
<comment type="subcellular location">
    <subcellularLocation>
        <location evidence="1">Cytoplasm</location>
    </subcellularLocation>
    <subcellularLocation>
        <location evidence="1">Cytoplasm</location>
        <location evidence="1">Cell cortex</location>
    </subcellularLocation>
</comment>
<name>RASL3_BOVIN</name>
<keyword id="KW-0175">Coiled coil</keyword>
<keyword id="KW-0963">Cytoplasm</keyword>
<keyword id="KW-0343">GTPase activation</keyword>
<keyword id="KW-0597">Phosphoprotein</keyword>
<keyword id="KW-1185">Reference proteome</keyword>
<sequence>MDPPSPSRASQTQPVAPSPLTSYRWHSGGGAEKGAGGFRWGRLAGWGRAQSHQETTASSQPAPRSLFRRVLSAPPKESRTSRLKISKSLWGKNKSPPLDSEPEPENPEPEPELEPLATQIPEAPTPDVPVWNIEAFTLLDGKLVLLGNEDEGPRQPRMGSASSESSIHVASGNLKDPDRTPGKTDPEAAGPHQIHNVRGLLKRLKEKKKAKSELGASASRDGPPSALGSRESLATISELDLGAERDVRVWPLHPSLLEEPHCFQVTWAGGSRCFSCRSAAERDRWIEDLRRHFQPSQDNVEREETWLSVWVHEVKGLPRAAAAAPGVRTELWLDGALLARTTPRAGPGQLFWAERFHFEALPPARRLSLRLRGAGPGDAVLGRVALALEELGIPRAPAAGLERWFPLLGAPAGAALRARIRARRLRVLPSERYKELAEFLTFHYARLCGALELALSAQAKEELAAAMVRVLRATGRAQALVTDLGTAELARSGGREALLFRENTLATKAIDEYMKLVAQDYLQETLGQVVRRLCASTEDCEVDPSKCPASDLPQHQSRLRNSCKEVFENIIHSYNWFPAELGTVFSGWREACKARGSEALGPRLVCASLFLRLLCPAILSPSLFGLALEHPAPGPARTLTLIAKVIQNLANRAPFGEKEAYMSFMNTFLEDHGPAMQHFLDQVATVDADTAPSGYQGSSDLALQLAVLHAQLCTIFAELDQATRDNLEPLPTILHAIEEGRPVPVTVPMCLPAPRTQGHSSISAGEKPGFLAPRDLPKHTPLISKSQSLRSVHGAGSWARPRLEEEQPPRLPRPVKRTQSVPAGRPARRRPSAGPRPRPKGSLHAGPAPRGRPWTGASASLPRKPSVPWQRQMDQPRDKDQALGTHRPVGKLAELQCEVAALRQDLKMLSGLVESLSTHIRSLSEQQEQLRTQLQLLDSRLREGTAKLDPGRDRSTNEGHRLKSLECRLAEIESTQAQLKDTIQNLQLLPRTSESQSQPVPLKAPCINGDTT</sequence>
<evidence type="ECO:0000250" key="1">
    <source>
        <dbReference type="UniProtKB" id="Q86YV0"/>
    </source>
</evidence>
<evidence type="ECO:0000250" key="2">
    <source>
        <dbReference type="UniProtKB" id="Q8C2K5"/>
    </source>
</evidence>
<evidence type="ECO:0000255" key="3"/>
<evidence type="ECO:0000255" key="4">
    <source>
        <dbReference type="PROSITE-ProRule" id="PRU00041"/>
    </source>
</evidence>
<evidence type="ECO:0000255" key="5">
    <source>
        <dbReference type="PROSITE-ProRule" id="PRU00167"/>
    </source>
</evidence>
<evidence type="ECO:0000256" key="6">
    <source>
        <dbReference type="SAM" id="MobiDB-lite"/>
    </source>
</evidence>